<organism>
    <name type="scientific">Halomonas elongata (strain ATCC 33173 / DSM 2581 / NBRC 15536 / NCIMB 2198 / 1H9)</name>
    <dbReference type="NCBI Taxonomy" id="768066"/>
    <lineage>
        <taxon>Bacteria</taxon>
        <taxon>Pseudomonadati</taxon>
        <taxon>Pseudomonadota</taxon>
        <taxon>Gammaproteobacteria</taxon>
        <taxon>Oceanospirillales</taxon>
        <taxon>Halomonadaceae</taxon>
        <taxon>Halomonas</taxon>
    </lineage>
</organism>
<feature type="chain" id="PRO_0000428761" description="Transcriptional regulatory protein DoeX">
    <location>
        <begin position="1"/>
        <end position="158"/>
    </location>
</feature>
<feature type="domain" description="HTH asnC-type" evidence="2">
    <location>
        <begin position="3"/>
        <end position="64"/>
    </location>
</feature>
<feature type="DNA-binding region" description="H-T-H motif" evidence="2">
    <location>
        <begin position="22"/>
        <end position="41"/>
    </location>
</feature>
<accession>E1V7V9</accession>
<dbReference type="EMBL" id="FN869568">
    <property type="protein sequence ID" value="CBV43547.1"/>
    <property type="molecule type" value="Genomic_DNA"/>
</dbReference>
<dbReference type="RefSeq" id="WP_013333419.1">
    <property type="nucleotide sequence ID" value="NC_014532.2"/>
</dbReference>
<dbReference type="SMR" id="E1V7V9"/>
<dbReference type="STRING" id="768066.HELO_3663"/>
<dbReference type="GeneID" id="91011061"/>
<dbReference type="KEGG" id="hel:HELO_3663"/>
<dbReference type="eggNOG" id="COG1522">
    <property type="taxonomic scope" value="Bacteria"/>
</dbReference>
<dbReference type="HOGENOM" id="CLU_091233_0_0_6"/>
<dbReference type="OrthoDB" id="8590699at2"/>
<dbReference type="Proteomes" id="UP000008707">
    <property type="component" value="Chromosome"/>
</dbReference>
<dbReference type="GO" id="GO:0005829">
    <property type="term" value="C:cytosol"/>
    <property type="evidence" value="ECO:0007669"/>
    <property type="project" value="TreeGrafter"/>
</dbReference>
<dbReference type="GO" id="GO:0043565">
    <property type="term" value="F:sequence-specific DNA binding"/>
    <property type="evidence" value="ECO:0007669"/>
    <property type="project" value="InterPro"/>
</dbReference>
<dbReference type="GO" id="GO:0043200">
    <property type="term" value="P:response to amino acid"/>
    <property type="evidence" value="ECO:0007669"/>
    <property type="project" value="TreeGrafter"/>
</dbReference>
<dbReference type="CDD" id="cd00090">
    <property type="entry name" value="HTH_ARSR"/>
    <property type="match status" value="1"/>
</dbReference>
<dbReference type="Gene3D" id="3.30.70.920">
    <property type="match status" value="1"/>
</dbReference>
<dbReference type="Gene3D" id="1.10.10.10">
    <property type="entry name" value="Winged helix-like DNA-binding domain superfamily/Winged helix DNA-binding domain"/>
    <property type="match status" value="1"/>
</dbReference>
<dbReference type="InterPro" id="IPR011991">
    <property type="entry name" value="ArsR-like_HTH"/>
</dbReference>
<dbReference type="InterPro" id="IPR000485">
    <property type="entry name" value="AsnC-type_HTH_dom"/>
</dbReference>
<dbReference type="InterPro" id="IPR011008">
    <property type="entry name" value="Dimeric_a/b-barrel"/>
</dbReference>
<dbReference type="InterPro" id="IPR019888">
    <property type="entry name" value="Tscrpt_reg_AsnC-like"/>
</dbReference>
<dbReference type="InterPro" id="IPR019887">
    <property type="entry name" value="Tscrpt_reg_AsnC/Lrp_C"/>
</dbReference>
<dbReference type="InterPro" id="IPR036388">
    <property type="entry name" value="WH-like_DNA-bd_sf"/>
</dbReference>
<dbReference type="InterPro" id="IPR036390">
    <property type="entry name" value="WH_DNA-bd_sf"/>
</dbReference>
<dbReference type="PANTHER" id="PTHR30154">
    <property type="entry name" value="LEUCINE-RESPONSIVE REGULATORY PROTEIN"/>
    <property type="match status" value="1"/>
</dbReference>
<dbReference type="PANTHER" id="PTHR30154:SF34">
    <property type="entry name" value="TRANSCRIPTIONAL REGULATOR AZLB"/>
    <property type="match status" value="1"/>
</dbReference>
<dbReference type="Pfam" id="PF01037">
    <property type="entry name" value="AsnC_trans_reg"/>
    <property type="match status" value="1"/>
</dbReference>
<dbReference type="Pfam" id="PF13412">
    <property type="entry name" value="HTH_24"/>
    <property type="match status" value="1"/>
</dbReference>
<dbReference type="PRINTS" id="PR00033">
    <property type="entry name" value="HTHASNC"/>
</dbReference>
<dbReference type="SMART" id="SM00344">
    <property type="entry name" value="HTH_ASNC"/>
    <property type="match status" value="1"/>
</dbReference>
<dbReference type="SUPFAM" id="SSF54909">
    <property type="entry name" value="Dimeric alpha+beta barrel"/>
    <property type="match status" value="1"/>
</dbReference>
<dbReference type="SUPFAM" id="SSF46785">
    <property type="entry name" value="Winged helix' DNA-binding domain"/>
    <property type="match status" value="1"/>
</dbReference>
<dbReference type="PROSITE" id="PS50956">
    <property type="entry name" value="HTH_ASNC_2"/>
    <property type="match status" value="1"/>
</dbReference>
<evidence type="ECO:0000250" key="1"/>
<evidence type="ECO:0000255" key="2">
    <source>
        <dbReference type="PROSITE-ProRule" id="PRU00319"/>
    </source>
</evidence>
<evidence type="ECO:0000269" key="3">
    <source>
    </source>
</evidence>
<reference key="1">
    <citation type="journal article" date="2011" name="Environ. Microbiol.">
        <title>A blueprint of ectoine metabolism from the genome of the industrial producer Halomonas elongata DSM 2581(T).</title>
        <authorList>
            <person name="Schwibbert K."/>
            <person name="Marin-Sanguino A."/>
            <person name="Bagyan I."/>
            <person name="Heidrich G."/>
            <person name="Lentzen G."/>
            <person name="Seitz H."/>
            <person name="Rampp M."/>
            <person name="Schuster S.C."/>
            <person name="Klenk H.P."/>
            <person name="Pfeiffer F."/>
            <person name="Oesterhelt D."/>
            <person name="Kunte H.J."/>
        </authorList>
    </citation>
    <scope>NUCLEOTIDE SEQUENCE [LARGE SCALE GENOMIC DNA]</scope>
    <scope>FUNCTION</scope>
    <source>
        <strain>ATCC 33173 / DSM 2581 / NBRC 15536 / NCIMB 2198 / 1H9</strain>
    </source>
</reference>
<comment type="function">
    <text evidence="3">Acts as a transcriptional regulator. It binds DNA specifically to a fragment from the doeA promoter region.</text>
</comment>
<comment type="subcellular location">
    <subcellularLocation>
        <location evidence="1">Cytoplasm</location>
    </subcellularLocation>
</comment>
<name>DOEX_HALED</name>
<gene>
    <name type="primary">doeX</name>
    <name type="ordered locus">HELO_3663</name>
</gene>
<proteinExistence type="inferred from homology"/>
<protein>
    <recommendedName>
        <fullName>Transcriptional regulatory protein DoeX</fullName>
    </recommendedName>
</protein>
<sequence>MKLDRYDLKILEILSRDGRITKSKLAEAINLSVSPCWERVRRLEKAGVIEGYGARLNTDVLVKRTPVWVQIELKAHNAESFARFEALVHDTPEVTECVAVGGGVDYLVKFEATTIDTYQRLIDEWLVSDVGIERYFTYIVTKTVKRPSASISIDDLAT</sequence>
<keyword id="KW-0963">Cytoplasm</keyword>
<keyword id="KW-0238">DNA-binding</keyword>
<keyword id="KW-0804">Transcription</keyword>
<keyword id="KW-0805">Transcription regulation</keyword>